<evidence type="ECO:0000255" key="1">
    <source>
        <dbReference type="HAMAP-Rule" id="MF_00212"/>
    </source>
</evidence>
<protein>
    <recommendedName>
        <fullName evidence="1">Probable malate:quinone oxidoreductase</fullName>
        <ecNumber evidence="1">1.1.5.4</ecNumber>
    </recommendedName>
    <alternativeName>
        <fullName evidence="1">MQO</fullName>
    </alternativeName>
    <alternativeName>
        <fullName evidence="1">Malate dehydrogenase [quinone]</fullName>
    </alternativeName>
</protein>
<dbReference type="EC" id="1.1.5.4" evidence="1"/>
<dbReference type="EMBL" id="CP001091">
    <property type="protein sequence ID" value="ACE62171.1"/>
    <property type="molecule type" value="Genomic_DNA"/>
</dbReference>
<dbReference type="RefSeq" id="WP_005602054.1">
    <property type="nucleotide sequence ID" value="NC_010939.1"/>
</dbReference>
<dbReference type="SMR" id="B3H2E6"/>
<dbReference type="KEGG" id="apa:APP7_1519"/>
<dbReference type="HOGENOM" id="CLU_028151_0_0_6"/>
<dbReference type="UniPathway" id="UPA00223">
    <property type="reaction ID" value="UER01008"/>
</dbReference>
<dbReference type="Proteomes" id="UP000001226">
    <property type="component" value="Chromosome"/>
</dbReference>
<dbReference type="GO" id="GO:0047545">
    <property type="term" value="F:2-hydroxyglutarate dehydrogenase activity"/>
    <property type="evidence" value="ECO:0007669"/>
    <property type="project" value="TreeGrafter"/>
</dbReference>
<dbReference type="GO" id="GO:0008924">
    <property type="term" value="F:L-malate dehydrogenase (quinone) activity"/>
    <property type="evidence" value="ECO:0007669"/>
    <property type="project" value="UniProtKB-UniRule"/>
</dbReference>
<dbReference type="GO" id="GO:0006099">
    <property type="term" value="P:tricarboxylic acid cycle"/>
    <property type="evidence" value="ECO:0007669"/>
    <property type="project" value="UniProtKB-UniRule"/>
</dbReference>
<dbReference type="HAMAP" id="MF_00212">
    <property type="entry name" value="MQO"/>
    <property type="match status" value="1"/>
</dbReference>
<dbReference type="InterPro" id="IPR036188">
    <property type="entry name" value="FAD/NAD-bd_sf"/>
</dbReference>
<dbReference type="InterPro" id="IPR006231">
    <property type="entry name" value="MQO"/>
</dbReference>
<dbReference type="NCBIfam" id="TIGR01320">
    <property type="entry name" value="mal_quin_oxido"/>
    <property type="match status" value="1"/>
</dbReference>
<dbReference type="NCBIfam" id="NF003603">
    <property type="entry name" value="PRK05257.1-1"/>
    <property type="match status" value="1"/>
</dbReference>
<dbReference type="NCBIfam" id="NF003604">
    <property type="entry name" value="PRK05257.1-3"/>
    <property type="match status" value="1"/>
</dbReference>
<dbReference type="NCBIfam" id="NF003606">
    <property type="entry name" value="PRK05257.2-1"/>
    <property type="match status" value="1"/>
</dbReference>
<dbReference type="NCBIfam" id="NF003608">
    <property type="entry name" value="PRK05257.2-4"/>
    <property type="match status" value="1"/>
</dbReference>
<dbReference type="NCBIfam" id="NF003611">
    <property type="entry name" value="PRK05257.3-2"/>
    <property type="match status" value="1"/>
</dbReference>
<dbReference type="NCBIfam" id="NF009875">
    <property type="entry name" value="PRK13339.1"/>
    <property type="match status" value="1"/>
</dbReference>
<dbReference type="PANTHER" id="PTHR43104">
    <property type="entry name" value="L-2-HYDROXYGLUTARATE DEHYDROGENASE, MITOCHONDRIAL"/>
    <property type="match status" value="1"/>
</dbReference>
<dbReference type="PANTHER" id="PTHR43104:SF2">
    <property type="entry name" value="L-2-HYDROXYGLUTARATE DEHYDROGENASE, MITOCHONDRIAL"/>
    <property type="match status" value="1"/>
</dbReference>
<dbReference type="Pfam" id="PF06039">
    <property type="entry name" value="Mqo"/>
    <property type="match status" value="1"/>
</dbReference>
<dbReference type="SUPFAM" id="SSF51905">
    <property type="entry name" value="FAD/NAD(P)-binding domain"/>
    <property type="match status" value="1"/>
</dbReference>
<keyword id="KW-0274">FAD</keyword>
<keyword id="KW-0285">Flavoprotein</keyword>
<keyword id="KW-0560">Oxidoreductase</keyword>
<keyword id="KW-0816">Tricarboxylic acid cycle</keyword>
<organism>
    <name type="scientific">Actinobacillus pleuropneumoniae serotype 7 (strain AP76)</name>
    <dbReference type="NCBI Taxonomy" id="537457"/>
    <lineage>
        <taxon>Bacteria</taxon>
        <taxon>Pseudomonadati</taxon>
        <taxon>Pseudomonadota</taxon>
        <taxon>Gammaproteobacteria</taxon>
        <taxon>Pasteurellales</taxon>
        <taxon>Pasteurellaceae</taxon>
        <taxon>Actinobacillus</taxon>
    </lineage>
</organism>
<sequence>MQDSSSALESYSDVTLIGAGIMSGTLGAFLTELAPEKSLAIFEKLSAVGLESSNEWNNAGTGHSALCELNYTEQKADGEVSVERAVKICEDFQLSLQLWSYLVETGRIQAPREFIHRIPHISFVQGEQNAQFLQKRYQSLAQSHLFEGMQFSRDHQQLAQWMPLMMQNRDSNETLAASYIQYGTDVNFGELTRKLFDYLVKQKAELNLNHTVKNIQRLANGEWKLTVVDQQGQKRVHRSKFVFIGGGGGALPLLQKSGITDGKNVGGFPVSGLFMVCNNPEVIAKHNAKVYGKAKLGAPPMSVPHLDTRFIEGKQSLLFGPFAGFTLKFLKQGSVLDLPTSVTPTNFCSVTKAGIKNLPLAHYLMKQAMLTKAQRMADLREFVPDAKDEDWDVVVAGQRVQVIKGGEMRFGTEVIRAEDGSLAALLGASPGASTSVKAMLDVLVSCFAAELPQWQAKLTQMLPSYGKALRNEPQLYAQIKQRVDQVLALAN</sequence>
<accession>B3H2E6</accession>
<feature type="chain" id="PRO_1000099866" description="Probable malate:quinone oxidoreductase">
    <location>
        <begin position="1"/>
        <end position="491"/>
    </location>
</feature>
<comment type="catalytic activity">
    <reaction evidence="1">
        <text>(S)-malate + a quinone = a quinol + oxaloacetate</text>
        <dbReference type="Rhea" id="RHEA:46012"/>
        <dbReference type="ChEBI" id="CHEBI:15589"/>
        <dbReference type="ChEBI" id="CHEBI:16452"/>
        <dbReference type="ChEBI" id="CHEBI:24646"/>
        <dbReference type="ChEBI" id="CHEBI:132124"/>
        <dbReference type="EC" id="1.1.5.4"/>
    </reaction>
</comment>
<comment type="cofactor">
    <cofactor evidence="1">
        <name>FAD</name>
        <dbReference type="ChEBI" id="CHEBI:57692"/>
    </cofactor>
</comment>
<comment type="pathway">
    <text evidence="1">Carbohydrate metabolism; tricarboxylic acid cycle; oxaloacetate from (S)-malate (quinone route): step 1/1.</text>
</comment>
<comment type="similarity">
    <text evidence="1">Belongs to the MQO family.</text>
</comment>
<proteinExistence type="inferred from homology"/>
<reference key="1">
    <citation type="submission" date="2008-06" db="EMBL/GenBank/DDBJ databases">
        <title>Genome and proteome analysis of A. pleuropneumoniae serotype 7.</title>
        <authorList>
            <person name="Linke B."/>
            <person name="Buettner F."/>
            <person name="Martinez-Arias R."/>
            <person name="Goesmann A."/>
            <person name="Baltes N."/>
            <person name="Tegetmeyer H."/>
            <person name="Singh M."/>
            <person name="Gerlach G.F."/>
        </authorList>
    </citation>
    <scope>NUCLEOTIDE SEQUENCE [LARGE SCALE GENOMIC DNA]</scope>
    <source>
        <strain>AP76</strain>
    </source>
</reference>
<gene>
    <name evidence="1" type="primary">mqo</name>
    <name type="ordered locus">APP7_1519</name>
</gene>
<name>MQO_ACTP7</name>